<reference key="1">
    <citation type="journal article" date="2000" name="Science">
        <title>The genome sequence of Drosophila melanogaster.</title>
        <authorList>
            <person name="Adams M.D."/>
            <person name="Celniker S.E."/>
            <person name="Holt R.A."/>
            <person name="Evans C.A."/>
            <person name="Gocayne J.D."/>
            <person name="Amanatides P.G."/>
            <person name="Scherer S.E."/>
            <person name="Li P.W."/>
            <person name="Hoskins R.A."/>
            <person name="Galle R.F."/>
            <person name="George R.A."/>
            <person name="Lewis S.E."/>
            <person name="Richards S."/>
            <person name="Ashburner M."/>
            <person name="Henderson S.N."/>
            <person name="Sutton G.G."/>
            <person name="Wortman J.R."/>
            <person name="Yandell M.D."/>
            <person name="Zhang Q."/>
            <person name="Chen L.X."/>
            <person name="Brandon R.C."/>
            <person name="Rogers Y.-H.C."/>
            <person name="Blazej R.G."/>
            <person name="Champe M."/>
            <person name="Pfeiffer B.D."/>
            <person name="Wan K.H."/>
            <person name="Doyle C."/>
            <person name="Baxter E.G."/>
            <person name="Helt G."/>
            <person name="Nelson C.R."/>
            <person name="Miklos G.L.G."/>
            <person name="Abril J.F."/>
            <person name="Agbayani A."/>
            <person name="An H.-J."/>
            <person name="Andrews-Pfannkoch C."/>
            <person name="Baldwin D."/>
            <person name="Ballew R.M."/>
            <person name="Basu A."/>
            <person name="Baxendale J."/>
            <person name="Bayraktaroglu L."/>
            <person name="Beasley E.M."/>
            <person name="Beeson K.Y."/>
            <person name="Benos P.V."/>
            <person name="Berman B.P."/>
            <person name="Bhandari D."/>
            <person name="Bolshakov S."/>
            <person name="Borkova D."/>
            <person name="Botchan M.R."/>
            <person name="Bouck J."/>
            <person name="Brokstein P."/>
            <person name="Brottier P."/>
            <person name="Burtis K.C."/>
            <person name="Busam D.A."/>
            <person name="Butler H."/>
            <person name="Cadieu E."/>
            <person name="Center A."/>
            <person name="Chandra I."/>
            <person name="Cherry J.M."/>
            <person name="Cawley S."/>
            <person name="Dahlke C."/>
            <person name="Davenport L.B."/>
            <person name="Davies P."/>
            <person name="de Pablos B."/>
            <person name="Delcher A."/>
            <person name="Deng Z."/>
            <person name="Mays A.D."/>
            <person name="Dew I."/>
            <person name="Dietz S.M."/>
            <person name="Dodson K."/>
            <person name="Doup L.E."/>
            <person name="Downes M."/>
            <person name="Dugan-Rocha S."/>
            <person name="Dunkov B.C."/>
            <person name="Dunn P."/>
            <person name="Durbin K.J."/>
            <person name="Evangelista C.C."/>
            <person name="Ferraz C."/>
            <person name="Ferriera S."/>
            <person name="Fleischmann W."/>
            <person name="Fosler C."/>
            <person name="Gabrielian A.E."/>
            <person name="Garg N.S."/>
            <person name="Gelbart W.M."/>
            <person name="Glasser K."/>
            <person name="Glodek A."/>
            <person name="Gong F."/>
            <person name="Gorrell J.H."/>
            <person name="Gu Z."/>
            <person name="Guan P."/>
            <person name="Harris M."/>
            <person name="Harris N.L."/>
            <person name="Harvey D.A."/>
            <person name="Heiman T.J."/>
            <person name="Hernandez J.R."/>
            <person name="Houck J."/>
            <person name="Hostin D."/>
            <person name="Houston K.A."/>
            <person name="Howland T.J."/>
            <person name="Wei M.-H."/>
            <person name="Ibegwam C."/>
            <person name="Jalali M."/>
            <person name="Kalush F."/>
            <person name="Karpen G.H."/>
            <person name="Ke Z."/>
            <person name="Kennison J.A."/>
            <person name="Ketchum K.A."/>
            <person name="Kimmel B.E."/>
            <person name="Kodira C.D."/>
            <person name="Kraft C.L."/>
            <person name="Kravitz S."/>
            <person name="Kulp D."/>
            <person name="Lai Z."/>
            <person name="Lasko P."/>
            <person name="Lei Y."/>
            <person name="Levitsky A.A."/>
            <person name="Li J.H."/>
            <person name="Li Z."/>
            <person name="Liang Y."/>
            <person name="Lin X."/>
            <person name="Liu X."/>
            <person name="Mattei B."/>
            <person name="McIntosh T.C."/>
            <person name="McLeod M.P."/>
            <person name="McPherson D."/>
            <person name="Merkulov G."/>
            <person name="Milshina N.V."/>
            <person name="Mobarry C."/>
            <person name="Morris J."/>
            <person name="Moshrefi A."/>
            <person name="Mount S.M."/>
            <person name="Moy M."/>
            <person name="Murphy B."/>
            <person name="Murphy L."/>
            <person name="Muzny D.M."/>
            <person name="Nelson D.L."/>
            <person name="Nelson D.R."/>
            <person name="Nelson K.A."/>
            <person name="Nixon K."/>
            <person name="Nusskern D.R."/>
            <person name="Pacleb J.M."/>
            <person name="Palazzolo M."/>
            <person name="Pittman G.S."/>
            <person name="Pan S."/>
            <person name="Pollard J."/>
            <person name="Puri V."/>
            <person name="Reese M.G."/>
            <person name="Reinert K."/>
            <person name="Remington K."/>
            <person name="Saunders R.D.C."/>
            <person name="Scheeler F."/>
            <person name="Shen H."/>
            <person name="Shue B.C."/>
            <person name="Siden-Kiamos I."/>
            <person name="Simpson M."/>
            <person name="Skupski M.P."/>
            <person name="Smith T.J."/>
            <person name="Spier E."/>
            <person name="Spradling A.C."/>
            <person name="Stapleton M."/>
            <person name="Strong R."/>
            <person name="Sun E."/>
            <person name="Svirskas R."/>
            <person name="Tector C."/>
            <person name="Turner R."/>
            <person name="Venter E."/>
            <person name="Wang A.H."/>
            <person name="Wang X."/>
            <person name="Wang Z.-Y."/>
            <person name="Wassarman D.A."/>
            <person name="Weinstock G.M."/>
            <person name="Weissenbach J."/>
            <person name="Williams S.M."/>
            <person name="Woodage T."/>
            <person name="Worley K.C."/>
            <person name="Wu D."/>
            <person name="Yang S."/>
            <person name="Yao Q.A."/>
            <person name="Ye J."/>
            <person name="Yeh R.-F."/>
            <person name="Zaveri J.S."/>
            <person name="Zhan M."/>
            <person name="Zhang G."/>
            <person name="Zhao Q."/>
            <person name="Zheng L."/>
            <person name="Zheng X.H."/>
            <person name="Zhong F.N."/>
            <person name="Zhong W."/>
            <person name="Zhou X."/>
            <person name="Zhu S.C."/>
            <person name="Zhu X."/>
            <person name="Smith H.O."/>
            <person name="Gibbs R.A."/>
            <person name="Myers E.W."/>
            <person name="Rubin G.M."/>
            <person name="Venter J.C."/>
        </authorList>
    </citation>
    <scope>NUCLEOTIDE SEQUENCE [LARGE SCALE GENOMIC DNA]</scope>
    <source>
        <strain>Berkeley</strain>
    </source>
</reference>
<reference key="2">
    <citation type="journal article" date="2002" name="Genome Biol.">
        <title>Annotation of the Drosophila melanogaster euchromatic genome: a systematic review.</title>
        <authorList>
            <person name="Misra S."/>
            <person name="Crosby M.A."/>
            <person name="Mungall C.J."/>
            <person name="Matthews B.B."/>
            <person name="Campbell K.S."/>
            <person name="Hradecky P."/>
            <person name="Huang Y."/>
            <person name="Kaminker J.S."/>
            <person name="Millburn G.H."/>
            <person name="Prochnik S.E."/>
            <person name="Smith C.D."/>
            <person name="Tupy J.L."/>
            <person name="Whitfield E.J."/>
            <person name="Bayraktaroglu L."/>
            <person name="Berman B.P."/>
            <person name="Bettencourt B.R."/>
            <person name="Celniker S.E."/>
            <person name="de Grey A.D.N.J."/>
            <person name="Drysdale R.A."/>
            <person name="Harris N.L."/>
            <person name="Richter J."/>
            <person name="Russo S."/>
            <person name="Schroeder A.J."/>
            <person name="Shu S.Q."/>
            <person name="Stapleton M."/>
            <person name="Yamada C."/>
            <person name="Ashburner M."/>
            <person name="Gelbart W.M."/>
            <person name="Rubin G.M."/>
            <person name="Lewis S.E."/>
        </authorList>
    </citation>
    <scope>GENOME REANNOTATION</scope>
    <source>
        <strain>Berkeley</strain>
    </source>
</reference>
<reference key="3">
    <citation type="journal article" date="2002" name="Genome Biol.">
        <title>A Drosophila full-length cDNA resource.</title>
        <authorList>
            <person name="Stapleton M."/>
            <person name="Carlson J.W."/>
            <person name="Brokstein P."/>
            <person name="Yu C."/>
            <person name="Champe M."/>
            <person name="George R.A."/>
            <person name="Guarin H."/>
            <person name="Kronmiller B."/>
            <person name="Pacleb J.M."/>
            <person name="Park S."/>
            <person name="Wan K.H."/>
            <person name="Rubin G.M."/>
            <person name="Celniker S.E."/>
        </authorList>
    </citation>
    <scope>NUCLEOTIDE SEQUENCE [LARGE SCALE MRNA]</scope>
    <source>
        <strain>Berkeley</strain>
        <tissue>Embryo</tissue>
    </source>
</reference>
<proteinExistence type="evidence at transcript level"/>
<dbReference type="EMBL" id="AE013599">
    <property type="protein sequence ID" value="AAF58161.2"/>
    <property type="molecule type" value="Genomic_DNA"/>
</dbReference>
<dbReference type="EMBL" id="AY071157">
    <property type="protein sequence ID" value="AAL48779.1"/>
    <property type="molecule type" value="mRNA"/>
</dbReference>
<dbReference type="RefSeq" id="NP_611022.2">
    <property type="nucleotide sequence ID" value="NM_137178.6"/>
</dbReference>
<dbReference type="SMR" id="Q7JZM8"/>
<dbReference type="BioGRID" id="62427">
    <property type="interactions" value="4"/>
</dbReference>
<dbReference type="FunCoup" id="Q7JZM8">
    <property type="interactions" value="39"/>
</dbReference>
<dbReference type="IntAct" id="Q7JZM8">
    <property type="interactions" value="14"/>
</dbReference>
<dbReference type="STRING" id="7227.FBpp0086531"/>
<dbReference type="PaxDb" id="7227-FBpp0086531"/>
<dbReference type="DNASU" id="36688"/>
<dbReference type="EnsemblMetazoa" id="FBtr0087400">
    <property type="protein sequence ID" value="FBpp0086531"/>
    <property type="gene ID" value="FBgn0034001"/>
</dbReference>
<dbReference type="GeneID" id="36688"/>
<dbReference type="KEGG" id="dme:Dmel_CG12954"/>
<dbReference type="AGR" id="FB:FBgn0034001"/>
<dbReference type="CTD" id="64975"/>
<dbReference type="FlyBase" id="FBgn0034001">
    <property type="gene designation" value="mRpL41"/>
</dbReference>
<dbReference type="VEuPathDB" id="VectorBase:FBgn0034001"/>
<dbReference type="eggNOG" id="KOG4756">
    <property type="taxonomic scope" value="Eukaryota"/>
</dbReference>
<dbReference type="GeneTree" id="ENSGT00390000013158"/>
<dbReference type="HOGENOM" id="CLU_136410_0_0_1"/>
<dbReference type="InParanoid" id="Q7JZM8"/>
<dbReference type="OMA" id="CQQRTIS"/>
<dbReference type="OrthoDB" id="408933at2759"/>
<dbReference type="PhylomeDB" id="Q7JZM8"/>
<dbReference type="Reactome" id="R-DME-5389840">
    <property type="pathway name" value="Mitochondrial translation elongation"/>
</dbReference>
<dbReference type="Reactome" id="R-DME-5419276">
    <property type="pathway name" value="Mitochondrial translation termination"/>
</dbReference>
<dbReference type="BioGRID-ORCS" id="36688">
    <property type="hits" value="0 hits in 1 CRISPR screen"/>
</dbReference>
<dbReference type="GenomeRNAi" id="36688"/>
<dbReference type="PRO" id="PR:Q7JZM8"/>
<dbReference type="Proteomes" id="UP000000803">
    <property type="component" value="Chromosome 2R"/>
</dbReference>
<dbReference type="Bgee" id="FBgn0034001">
    <property type="expression patterns" value="Expressed in adult anterior midgut class I enteroendocrine cell in adult midgut (Drosophila) and 99 other cell types or tissues"/>
</dbReference>
<dbReference type="GO" id="GO:0005762">
    <property type="term" value="C:mitochondrial large ribosomal subunit"/>
    <property type="evidence" value="ECO:0000250"/>
    <property type="project" value="UniProtKB"/>
</dbReference>
<dbReference type="GO" id="GO:1990904">
    <property type="term" value="C:ribonucleoprotein complex"/>
    <property type="evidence" value="ECO:0000250"/>
    <property type="project" value="UniProtKB"/>
</dbReference>
<dbReference type="GO" id="GO:0003735">
    <property type="term" value="F:structural constituent of ribosome"/>
    <property type="evidence" value="ECO:0000250"/>
    <property type="project" value="UniProtKB"/>
</dbReference>
<dbReference type="GO" id="GO:0032543">
    <property type="term" value="P:mitochondrial translation"/>
    <property type="evidence" value="ECO:0000304"/>
    <property type="project" value="FlyBase"/>
</dbReference>
<dbReference type="GO" id="GO:0006412">
    <property type="term" value="P:translation"/>
    <property type="evidence" value="ECO:0000250"/>
    <property type="project" value="UniProtKB"/>
</dbReference>
<dbReference type="InterPro" id="IPR019189">
    <property type="entry name" value="Ribosomal_mL41"/>
</dbReference>
<dbReference type="PANTHER" id="PTHR21338:SF0">
    <property type="entry name" value="LARGE RIBOSOMAL SUBUNIT PROTEIN ML41"/>
    <property type="match status" value="1"/>
</dbReference>
<dbReference type="PANTHER" id="PTHR21338">
    <property type="entry name" value="MITOCHONDRIAL RIBOSOMAL PROTEIN L41"/>
    <property type="match status" value="1"/>
</dbReference>
<dbReference type="Pfam" id="PF09809">
    <property type="entry name" value="MRP-L27"/>
    <property type="match status" value="1"/>
</dbReference>
<organism>
    <name type="scientific">Drosophila melanogaster</name>
    <name type="common">Fruit fly</name>
    <dbReference type="NCBI Taxonomy" id="7227"/>
    <lineage>
        <taxon>Eukaryota</taxon>
        <taxon>Metazoa</taxon>
        <taxon>Ecdysozoa</taxon>
        <taxon>Arthropoda</taxon>
        <taxon>Hexapoda</taxon>
        <taxon>Insecta</taxon>
        <taxon>Pterygota</taxon>
        <taxon>Neoptera</taxon>
        <taxon>Endopterygota</taxon>
        <taxon>Diptera</taxon>
        <taxon>Brachycera</taxon>
        <taxon>Muscomorpha</taxon>
        <taxon>Ephydroidea</taxon>
        <taxon>Drosophilidae</taxon>
        <taxon>Drosophila</taxon>
        <taxon>Sophophora</taxon>
    </lineage>
</organism>
<keyword id="KW-0496">Mitochondrion</keyword>
<keyword id="KW-1185">Reference proteome</keyword>
<keyword id="KW-0687">Ribonucleoprotein</keyword>
<keyword id="KW-0689">Ribosomal protein</keyword>
<keyword id="KW-0809">Transit peptide</keyword>
<comment type="subunit">
    <text evidence="1">Component of the mitochondrial ribosome large subunit (39S) which comprises a 16S rRNA and about 50 distinct proteins.</text>
</comment>
<comment type="subcellular location">
    <subcellularLocation>
        <location evidence="1">Mitochondrion</location>
    </subcellularLocation>
</comment>
<comment type="similarity">
    <text evidence="3">Belongs to the mitochondrion-specific ribosomal protein mL41 family.</text>
</comment>
<evidence type="ECO:0000250" key="1">
    <source>
        <dbReference type="UniProtKB" id="Q8IXM3"/>
    </source>
</evidence>
<evidence type="ECO:0000256" key="2">
    <source>
        <dbReference type="SAM" id="MobiDB-lite"/>
    </source>
</evidence>
<evidence type="ECO:0000305" key="3"/>
<protein>
    <recommendedName>
        <fullName evidence="3">Large ribosomal subunit protein mL41</fullName>
    </recommendedName>
    <alternativeName>
        <fullName>39S ribosomal protein L41, mitochondrial</fullName>
        <shortName>L41mt</shortName>
        <shortName>MRP-L41</shortName>
    </alternativeName>
</protein>
<gene>
    <name type="primary">mRpL41</name>
    <name type="ORF">CG12954</name>
</gene>
<feature type="transit peptide" description="Mitochondrion">
    <location>
        <begin position="1"/>
        <end position="26"/>
    </location>
</feature>
<feature type="chain" id="PRO_0000273235" description="Large ribosomal subunit protein mL41">
    <location>
        <begin position="27"/>
        <end position="166"/>
    </location>
</feature>
<feature type="region of interest" description="Disordered" evidence="2">
    <location>
        <begin position="136"/>
        <end position="166"/>
    </location>
</feature>
<accession>Q7JZM8</accession>
<accession>A1Z9Y9</accession>
<name>RM41_DROME</name>
<sequence>MNNCIKVVPIALRCQQRTISTSSVLEGKRNFRKFNAYNKRGTRVVKEAQKTLANPPVAIHKRGVRDTGILVDGQYVEIPEKIPDIIVPDLTGCKLKPYVSYKAPDVVQSEFTSLDLFNAVYSQKIIEDFKAGKLQKDGSAKEPSVNEQLTPEEALQRARKTGSDIF</sequence>